<evidence type="ECO:0000250" key="1">
    <source>
        <dbReference type="UniProtKB" id="P18688"/>
    </source>
</evidence>
<evidence type="ECO:0000250" key="2">
    <source>
        <dbReference type="UniProtKB" id="P46020"/>
    </source>
</evidence>
<evidence type="ECO:0000255" key="3"/>
<evidence type="ECO:0000305" key="4"/>
<evidence type="ECO:0007744" key="5">
    <source>
    </source>
</evidence>
<organism>
    <name type="scientific">Rattus norvegicus</name>
    <name type="common">Rat</name>
    <dbReference type="NCBI Taxonomy" id="10116"/>
    <lineage>
        <taxon>Eukaryota</taxon>
        <taxon>Metazoa</taxon>
        <taxon>Chordata</taxon>
        <taxon>Craniata</taxon>
        <taxon>Vertebrata</taxon>
        <taxon>Euteleostomi</taxon>
        <taxon>Mammalia</taxon>
        <taxon>Eutheria</taxon>
        <taxon>Euarchontoglires</taxon>
        <taxon>Glires</taxon>
        <taxon>Rodentia</taxon>
        <taxon>Myomorpha</taxon>
        <taxon>Muroidea</taxon>
        <taxon>Muridae</taxon>
        <taxon>Murinae</taxon>
        <taxon>Rattus</taxon>
    </lineage>
</organism>
<protein>
    <recommendedName>
        <fullName>Phosphorylase b kinase regulatory subunit alpha, skeletal muscle isoform</fullName>
        <shortName>Phosphorylase kinase alpha M subunit</shortName>
    </recommendedName>
</protein>
<comment type="function">
    <text>Phosphorylase b kinase catalyzes the phosphorylation of serine in certain substrates, including troponin I. The alpha chain may bind calmodulin.</text>
</comment>
<comment type="activity regulation">
    <text>By phosphorylation of various serine residues and by calcium.</text>
</comment>
<comment type="pathway">
    <text>Glycan biosynthesis; glycogen metabolism.</text>
</comment>
<comment type="subunit">
    <text>Hexadecamer of 4 heterotetramers, each composed of alpha, beta, gamma, and delta subunits. Alpha (PHKA1 or PHKA2) and beta (PHKB) are regulatory subunits, gamma (PHKG1 or PHKG2) is the catalytic subunit, and delta is calmodulin.</text>
</comment>
<comment type="subcellular location">
    <subcellularLocation>
        <location evidence="4">Cell membrane</location>
        <topology evidence="4">Lipid-anchor</topology>
        <orientation evidence="4">Cytoplasmic side</orientation>
    </subcellularLocation>
</comment>
<comment type="PTM">
    <text evidence="1">Although the final Cys may be farnesylated, the terminal tripeptide is probably not removed, and the C-terminus is not methylated.</text>
</comment>
<comment type="similarity">
    <text evidence="4">Belongs to the phosphorylase b kinase regulatory chain family.</text>
</comment>
<proteinExistence type="evidence at protein level"/>
<name>KPB1_RAT</name>
<dbReference type="EMBL" id="AF197561">
    <property type="protein sequence ID" value="AAF06673.1"/>
    <property type="molecule type" value="mRNA"/>
</dbReference>
<dbReference type="EMBL" id="M92917">
    <property type="protein sequence ID" value="AAA41858.1"/>
    <property type="molecule type" value="mRNA"/>
</dbReference>
<dbReference type="EMBL" id="M92918">
    <property type="protein sequence ID" value="AAA41859.1"/>
    <property type="molecule type" value="mRNA"/>
</dbReference>
<dbReference type="EMBL" id="M92919">
    <property type="protein sequence ID" value="AAA41860.1"/>
    <property type="molecule type" value="mRNA"/>
</dbReference>
<dbReference type="PIR" id="B43431">
    <property type="entry name" value="B43431"/>
</dbReference>
<dbReference type="PIR" id="C43431">
    <property type="entry name" value="C43431"/>
</dbReference>
<dbReference type="SMR" id="Q64649"/>
<dbReference type="FunCoup" id="Q64649">
    <property type="interactions" value="2368"/>
</dbReference>
<dbReference type="STRING" id="10116.ENSRNOP00000068112"/>
<dbReference type="iPTMnet" id="Q64649"/>
<dbReference type="PhosphoSitePlus" id="Q64649"/>
<dbReference type="PaxDb" id="10116-ENSRNOP00000068112"/>
<dbReference type="UCSC" id="RGD:621522">
    <property type="organism name" value="rat"/>
</dbReference>
<dbReference type="AGR" id="RGD:621522"/>
<dbReference type="RGD" id="621522">
    <property type="gene designation" value="Phka1"/>
</dbReference>
<dbReference type="eggNOG" id="KOG3635">
    <property type="taxonomic scope" value="Eukaryota"/>
</dbReference>
<dbReference type="InParanoid" id="Q64649"/>
<dbReference type="PhylomeDB" id="Q64649"/>
<dbReference type="BRENDA" id="2.7.11.19">
    <property type="organism ID" value="5301"/>
</dbReference>
<dbReference type="Reactome" id="R-RNO-70221">
    <property type="pathway name" value="Glycogen breakdown (glycogenolysis)"/>
</dbReference>
<dbReference type="UniPathway" id="UPA00163"/>
<dbReference type="PRO" id="PR:Q64649"/>
<dbReference type="Proteomes" id="UP000002494">
    <property type="component" value="Unplaced"/>
</dbReference>
<dbReference type="GO" id="GO:0005964">
    <property type="term" value="C:phosphorylase kinase complex"/>
    <property type="evidence" value="ECO:0000314"/>
    <property type="project" value="RGD"/>
</dbReference>
<dbReference type="GO" id="GO:0005886">
    <property type="term" value="C:plasma membrane"/>
    <property type="evidence" value="ECO:0007669"/>
    <property type="project" value="UniProtKB-SubCell"/>
</dbReference>
<dbReference type="GO" id="GO:0005516">
    <property type="term" value="F:calmodulin binding"/>
    <property type="evidence" value="ECO:0007669"/>
    <property type="project" value="UniProtKB-KW"/>
</dbReference>
<dbReference type="GO" id="GO:0004105">
    <property type="term" value="F:choline-phosphate cytidylyltransferase activity"/>
    <property type="evidence" value="ECO:0000304"/>
    <property type="project" value="RGD"/>
</dbReference>
<dbReference type="GO" id="GO:0005977">
    <property type="term" value="P:glycogen metabolic process"/>
    <property type="evidence" value="ECO:0007669"/>
    <property type="project" value="UniProtKB-UniPathway"/>
</dbReference>
<dbReference type="GO" id="GO:0006656">
    <property type="term" value="P:phosphatidylcholine biosynthetic process"/>
    <property type="evidence" value="ECO:0000304"/>
    <property type="project" value="RGD"/>
</dbReference>
<dbReference type="GO" id="GO:0045819">
    <property type="term" value="P:positive regulation of glycogen catabolic process"/>
    <property type="evidence" value="ECO:0000266"/>
    <property type="project" value="RGD"/>
</dbReference>
<dbReference type="FunFam" id="1.50.10.10:FF:000004">
    <property type="entry name" value="Phosphorylase b kinase regulatory subunit"/>
    <property type="match status" value="1"/>
</dbReference>
<dbReference type="Gene3D" id="1.50.10.10">
    <property type="match status" value="1"/>
</dbReference>
<dbReference type="InterPro" id="IPR008928">
    <property type="entry name" value="6-hairpin_glycosidase_sf"/>
</dbReference>
<dbReference type="InterPro" id="IPR012341">
    <property type="entry name" value="6hp_glycosidase-like_sf"/>
</dbReference>
<dbReference type="InterPro" id="IPR011613">
    <property type="entry name" value="GH15-like"/>
</dbReference>
<dbReference type="InterPro" id="IPR045583">
    <property type="entry name" value="KPBA/B_C"/>
</dbReference>
<dbReference type="InterPro" id="IPR008734">
    <property type="entry name" value="PHK_A/B_su"/>
</dbReference>
<dbReference type="PANTHER" id="PTHR10749">
    <property type="entry name" value="PHOSPHORYLASE B KINASE REGULATORY SUBUNIT"/>
    <property type="match status" value="1"/>
</dbReference>
<dbReference type="PANTHER" id="PTHR10749:SF4">
    <property type="entry name" value="PHOSPHORYLASE B KINASE REGULATORY SUBUNIT ALPHA, SKELETAL MUSCLE ISOFORM"/>
    <property type="match status" value="1"/>
</dbReference>
<dbReference type="Pfam" id="PF00723">
    <property type="entry name" value="Glyco_hydro_15"/>
    <property type="match status" value="1"/>
</dbReference>
<dbReference type="Pfam" id="PF19292">
    <property type="entry name" value="KPBB_C"/>
    <property type="match status" value="1"/>
</dbReference>
<dbReference type="SUPFAM" id="SSF48208">
    <property type="entry name" value="Six-hairpin glycosidases"/>
    <property type="match status" value="1"/>
</dbReference>
<sequence>MRSRSNSGVRLDSYARLVQQHTILCHQNPVTGLLPASYDQKDAWVRDNVYSILAVWGLGLAYRKNADRDEDKAKAYELEQSVVKLMRGLLHCMIRQVDKVESFKYSQSTKDSLHAKYNTKTCATVVGDDQWGHLQLDATSVYLLFLAQMTASGLHIIHSLDEVNFIQNLVFYIEAAYKTADFGIWERGDKTNQGISELNACSVGMAKAALEALDELDLFGVKGGPQSVIHVLADEVQHCQSILNTLLPRASTSKEVDASLLSVISFPAFAVEDSKLVEITKQEIITKLQGRYGCCRFLRDGYKTPKEDPNRLYYEPAELKLFENIECEWPLFWTYFILDGIFSGNTEQVQEYREALDAVLIKGKNGVPLLPELYSVPPDRVDEEYQNPHTVDRVPMGKLPHMWGQSLYILGNLMAEGFLAPGEIDPLNRRFSTVPKPDVVVQVSILAETEEIKAILKDKGIDVETIAEVYPIRVQPARILSHIYSSLGCNSRMKLSGRPYRLMGVLGTSKLYDIRKTIYTFTPQFIDQQQFYLALDNQMIVEMLRTDLSYLCSRWRMTGQPTITFPISHTMLDEDGASLNSSILAALRKMQDGYFGGARIQTGKLSEFLTTSCCTHLSFMDPGPEGKLYSEDYDEDYDDELDSGNWMDSYDSTRNARCGDEVARYLDHLLAHTGPHPKLTPTSRKGGLDRFRAAVQTTCDLMSLVAKAKELHIQNVHMYLPTKLFQPSRPSLNLLDSPESPQDSQVPSVRVEVHLPRDQSGEVDFQSLVSQLKETSSLQEQADILYMLYTMKGPDWNTELYEEGGSTVRELLSELYVKVGEIRHWGLIRYISGILRKKVEALDEACTDLLSYQKHLTVGLPPEPREKTISAPLPYEALTKLIDEASEGDMNISTLTQEIMVYLAMYMRTQPGLFAEMFRLRIGLIIQVMATELAHSLRCSAEEATEGLMNLSPSAMRNLLHHILSGKEFGVERSVRPTDSNVSPAISIHEIGAVGATKTERTGIMQLKSEIKQVEFRRLSVSPESQTSGGHPSSIDLMSPTFLSPAACISASSGSFPTVCEPQTSKDSRQGQWQRRRRLDGALNRVPIGFYQKVWKILQKCHGLSVEGFVLPSSSTREMTPGEIKFSVHVESVLNRVPQPEYRQLLVEAILVLTMLADIEIHSIGSIIAVEKIVHIANDLFLQEKKTLGADDIMLAKDPASGICTLLYDSAPSGRFGTMTYLSKAAATYVQEFLPHSLCAVQ</sequence>
<gene>
    <name type="primary">Phka1</name>
</gene>
<feature type="chain" id="PRO_0000057728" description="Phosphorylase b kinase regulatory subunit alpha, skeletal muscle isoform">
    <location>
        <begin position="1"/>
        <end position="1242"/>
    </location>
</feature>
<feature type="region of interest" description="Calmodulin-binding" evidence="3">
    <location>
        <begin position="812"/>
        <end position="842"/>
    </location>
</feature>
<feature type="region of interest" description="Calmodulin-binding" evidence="3">
    <location>
        <begin position="1065"/>
        <end position="1105"/>
    </location>
</feature>
<feature type="modified residue" description="Phosphoserine" evidence="5">
    <location>
        <position position="630"/>
    </location>
</feature>
<feature type="modified residue" description="Phosphoserine" evidence="2">
    <location>
        <position position="731"/>
    </location>
</feature>
<feature type="modified residue" description="Phosphoserine" evidence="5">
    <location>
        <position position="737"/>
    </location>
</feature>
<feature type="modified residue" description="Phosphoserine" evidence="5">
    <location>
        <position position="740"/>
    </location>
</feature>
<feature type="modified residue" description="Phosphoserine" evidence="5">
    <location>
        <position position="760"/>
    </location>
</feature>
<feature type="modified residue" description="Phosphoserine" evidence="5">
    <location>
        <position position="813"/>
    </location>
</feature>
<feature type="modified residue" description="Phosphoserine" evidence="5">
    <location>
        <position position="974"/>
    </location>
</feature>
<feature type="modified residue" description="Phosphoserine" evidence="2">
    <location>
        <position position="983"/>
    </location>
</feature>
<feature type="modified residue" description="Phosphoserine" evidence="5">
    <location>
        <position position="987"/>
    </location>
</feature>
<feature type="modified residue" description="Phosphoserine; by autocatalysis" evidence="1">
    <location>
        <position position="1009"/>
    </location>
</feature>
<feature type="modified residue" description="Phosphoserine; by PKA" evidence="1">
    <location>
        <position position="1020"/>
    </location>
</feature>
<feature type="modified residue" description="Phosphoserine" evidence="1">
    <location>
        <position position="1022"/>
    </location>
</feature>
<feature type="modified residue" description="Phosphoserine" evidence="1">
    <location>
        <position position="1025"/>
    </location>
</feature>
<feature type="modified residue" description="Phosphoserine" evidence="5">
    <location>
        <position position="1132"/>
    </location>
</feature>
<feature type="lipid moiety-binding region" description="S-farnesyl cysteine" evidence="1">
    <location>
        <position position="1239"/>
    </location>
</feature>
<feature type="sequence conflict" description="In Ref. 2; AAA41858." evidence="4" ref="2">
    <original>T</original>
    <variation>S</variation>
    <location>
        <position position="245"/>
    </location>
</feature>
<feature type="sequence conflict" description="In Ref. 2." evidence="4" ref="2">
    <original>IS</original>
    <variation>V</variation>
    <location>
        <begin position="264"/>
        <end position="265"/>
    </location>
</feature>
<feature type="sequence conflict" description="In Ref. 2; AAA41860." evidence="4" ref="2">
    <original>I</original>
    <variation>L</variation>
    <location>
        <position position="926"/>
    </location>
</feature>
<feature type="sequence conflict" description="In Ref. 2; AAA41860." evidence="4" ref="2">
    <original>R</original>
    <variation>K</variation>
    <location>
        <position position="957"/>
    </location>
</feature>
<keyword id="KW-0112">Calmodulin-binding</keyword>
<keyword id="KW-0119">Carbohydrate metabolism</keyword>
<keyword id="KW-1003">Cell membrane</keyword>
<keyword id="KW-0321">Glycogen metabolism</keyword>
<keyword id="KW-0449">Lipoprotein</keyword>
<keyword id="KW-0472">Membrane</keyword>
<keyword id="KW-0514">Muscle protein</keyword>
<keyword id="KW-0597">Phosphoprotein</keyword>
<keyword id="KW-0636">Prenylation</keyword>
<keyword id="KW-1185">Reference proteome</keyword>
<reference key="1">
    <citation type="submission" date="1999-10" db="EMBL/GenBank/DDBJ databases">
        <title>Fundamental physicochemical characterization of the phosphorylase b kinase holoenzyme and alpha-gamma-delta and gamma-delta subunit subcomplexes reconstituted in baculovirus-infected insect cells.</title>
        <authorList>
            <person name="Brushia R.J."/>
            <person name="Hoye E.R."/>
            <person name="Walsh D.A."/>
        </authorList>
    </citation>
    <scope>NUCLEOTIDE SEQUENCE [MRNA]</scope>
    <source>
        <tissue>Skeletal muscle</tissue>
    </source>
</reference>
<reference key="2">
    <citation type="journal article" date="1992" name="J. Biol. Chem.">
        <title>Coordinated expression of phosphorylase kinase subunits in regenerating skeletal muscle.</title>
        <authorList>
            <person name="Cawley K.C."/>
            <person name="Akita C.G."/>
            <person name="Wineinger M.A."/>
            <person name="Carlsen R.C."/>
            <person name="Gorin F.A."/>
            <person name="Walsh D.A."/>
        </authorList>
    </citation>
    <scope>NUCLEOTIDE SEQUENCE [MRNA] OF 244-267; 547-658 AND 908-1136</scope>
    <source>
        <tissue>Skeletal muscle</tissue>
    </source>
</reference>
<reference key="3">
    <citation type="journal article" date="2012" name="Nat. Commun.">
        <title>Quantitative maps of protein phosphorylation sites across 14 different rat organs and tissues.</title>
        <authorList>
            <person name="Lundby A."/>
            <person name="Secher A."/>
            <person name="Lage K."/>
            <person name="Nordsborg N.B."/>
            <person name="Dmytriyev A."/>
            <person name="Lundby C."/>
            <person name="Olsen J.V."/>
        </authorList>
    </citation>
    <scope>PHOSPHORYLATION [LARGE SCALE ANALYSIS] AT SER-630; SER-737; SER-740; SER-760; SER-813; SER-974; SER-987 AND SER-1132</scope>
    <scope>IDENTIFICATION BY MASS SPECTROMETRY [LARGE SCALE ANALYSIS]</scope>
</reference>
<accession>Q64649</accession>
<accession>Q64650</accession>
<accession>Q64651</accession>
<accession>Q9QZ77</accession>